<reference key="1">
    <citation type="journal article" date="2006" name="J. Bacteriol.">
        <title>Pathogenomic sequence analysis of Bacillus cereus and Bacillus thuringiensis isolates closely related to Bacillus anthracis.</title>
        <authorList>
            <person name="Han C.S."/>
            <person name="Xie G."/>
            <person name="Challacombe J.F."/>
            <person name="Altherr M.R."/>
            <person name="Bhotika S.S."/>
            <person name="Bruce D."/>
            <person name="Campbell C.S."/>
            <person name="Campbell M.L."/>
            <person name="Chen J."/>
            <person name="Chertkov O."/>
            <person name="Cleland C."/>
            <person name="Dimitrijevic M."/>
            <person name="Doggett N.A."/>
            <person name="Fawcett J.J."/>
            <person name="Glavina T."/>
            <person name="Goodwin L.A."/>
            <person name="Hill K.K."/>
            <person name="Hitchcock P."/>
            <person name="Jackson P.J."/>
            <person name="Keim P."/>
            <person name="Kewalramani A.R."/>
            <person name="Longmire J."/>
            <person name="Lucas S."/>
            <person name="Malfatti S."/>
            <person name="McMurry K."/>
            <person name="Meincke L.J."/>
            <person name="Misra M."/>
            <person name="Moseman B.L."/>
            <person name="Mundt M."/>
            <person name="Munk A.C."/>
            <person name="Okinaka R.T."/>
            <person name="Parson-Quintana B."/>
            <person name="Reilly L.P."/>
            <person name="Richardson P."/>
            <person name="Robinson D.L."/>
            <person name="Rubin E."/>
            <person name="Saunders E."/>
            <person name="Tapia R."/>
            <person name="Tesmer J.G."/>
            <person name="Thayer N."/>
            <person name="Thompson L.S."/>
            <person name="Tice H."/>
            <person name="Ticknor L.O."/>
            <person name="Wills P.L."/>
            <person name="Brettin T.S."/>
            <person name="Gilna P."/>
        </authorList>
    </citation>
    <scope>NUCLEOTIDE SEQUENCE [LARGE SCALE GENOMIC DNA]</scope>
    <source>
        <strain>97-27</strain>
    </source>
</reference>
<dbReference type="EC" id="6.1.1.11" evidence="1"/>
<dbReference type="EMBL" id="AE017355">
    <property type="protein sequence ID" value="AAT60387.1"/>
    <property type="molecule type" value="Genomic_DNA"/>
</dbReference>
<dbReference type="RefSeq" id="WP_000884181.1">
    <property type="nucleotide sequence ID" value="NC_005957.1"/>
</dbReference>
<dbReference type="RefSeq" id="YP_034372.1">
    <property type="nucleotide sequence ID" value="NC_005957.1"/>
</dbReference>
<dbReference type="SMR" id="Q6HPZ8"/>
<dbReference type="GeneID" id="69534454"/>
<dbReference type="KEGG" id="btk:BT9727_0013"/>
<dbReference type="PATRIC" id="fig|281309.8.peg.13"/>
<dbReference type="HOGENOM" id="CLU_023797_1_1_9"/>
<dbReference type="UniPathway" id="UPA00906">
    <property type="reaction ID" value="UER00895"/>
</dbReference>
<dbReference type="Proteomes" id="UP000001301">
    <property type="component" value="Chromosome"/>
</dbReference>
<dbReference type="GO" id="GO:0005737">
    <property type="term" value="C:cytoplasm"/>
    <property type="evidence" value="ECO:0007669"/>
    <property type="project" value="UniProtKB-SubCell"/>
</dbReference>
<dbReference type="GO" id="GO:0005524">
    <property type="term" value="F:ATP binding"/>
    <property type="evidence" value="ECO:0007669"/>
    <property type="project" value="UniProtKB-UniRule"/>
</dbReference>
<dbReference type="GO" id="GO:0140096">
    <property type="term" value="F:catalytic activity, acting on a protein"/>
    <property type="evidence" value="ECO:0007669"/>
    <property type="project" value="UniProtKB-ARBA"/>
</dbReference>
<dbReference type="GO" id="GO:0004828">
    <property type="term" value="F:serine-tRNA ligase activity"/>
    <property type="evidence" value="ECO:0007669"/>
    <property type="project" value="UniProtKB-UniRule"/>
</dbReference>
<dbReference type="GO" id="GO:0016740">
    <property type="term" value="F:transferase activity"/>
    <property type="evidence" value="ECO:0007669"/>
    <property type="project" value="UniProtKB-ARBA"/>
</dbReference>
<dbReference type="GO" id="GO:0016260">
    <property type="term" value="P:selenocysteine biosynthetic process"/>
    <property type="evidence" value="ECO:0007669"/>
    <property type="project" value="UniProtKB-UniRule"/>
</dbReference>
<dbReference type="GO" id="GO:0006434">
    <property type="term" value="P:seryl-tRNA aminoacylation"/>
    <property type="evidence" value="ECO:0007669"/>
    <property type="project" value="UniProtKB-UniRule"/>
</dbReference>
<dbReference type="CDD" id="cd00770">
    <property type="entry name" value="SerRS_core"/>
    <property type="match status" value="1"/>
</dbReference>
<dbReference type="Gene3D" id="3.30.930.10">
    <property type="entry name" value="Bira Bifunctional Protein, Domain 2"/>
    <property type="match status" value="1"/>
</dbReference>
<dbReference type="Gene3D" id="1.10.287.40">
    <property type="entry name" value="Serine-tRNA synthetase, tRNA binding domain"/>
    <property type="match status" value="1"/>
</dbReference>
<dbReference type="HAMAP" id="MF_00176">
    <property type="entry name" value="Ser_tRNA_synth_type1"/>
    <property type="match status" value="1"/>
</dbReference>
<dbReference type="InterPro" id="IPR002314">
    <property type="entry name" value="aa-tRNA-synt_IIb"/>
</dbReference>
<dbReference type="InterPro" id="IPR006195">
    <property type="entry name" value="aa-tRNA-synth_II"/>
</dbReference>
<dbReference type="InterPro" id="IPR045864">
    <property type="entry name" value="aa-tRNA-synth_II/BPL/LPL"/>
</dbReference>
<dbReference type="InterPro" id="IPR002317">
    <property type="entry name" value="Ser-tRNA-ligase_type_1"/>
</dbReference>
<dbReference type="InterPro" id="IPR015866">
    <property type="entry name" value="Ser-tRNA-synth_1_N"/>
</dbReference>
<dbReference type="InterPro" id="IPR042103">
    <property type="entry name" value="SerRS_1_N_sf"/>
</dbReference>
<dbReference type="InterPro" id="IPR033729">
    <property type="entry name" value="SerRS_core"/>
</dbReference>
<dbReference type="InterPro" id="IPR010978">
    <property type="entry name" value="tRNA-bd_arm"/>
</dbReference>
<dbReference type="NCBIfam" id="TIGR00414">
    <property type="entry name" value="serS"/>
    <property type="match status" value="1"/>
</dbReference>
<dbReference type="PANTHER" id="PTHR43697:SF1">
    <property type="entry name" value="SERINE--TRNA LIGASE"/>
    <property type="match status" value="1"/>
</dbReference>
<dbReference type="PANTHER" id="PTHR43697">
    <property type="entry name" value="SERYL-TRNA SYNTHETASE"/>
    <property type="match status" value="1"/>
</dbReference>
<dbReference type="Pfam" id="PF02403">
    <property type="entry name" value="Seryl_tRNA_N"/>
    <property type="match status" value="1"/>
</dbReference>
<dbReference type="Pfam" id="PF00587">
    <property type="entry name" value="tRNA-synt_2b"/>
    <property type="match status" value="1"/>
</dbReference>
<dbReference type="PIRSF" id="PIRSF001529">
    <property type="entry name" value="Ser-tRNA-synth_IIa"/>
    <property type="match status" value="1"/>
</dbReference>
<dbReference type="PRINTS" id="PR00981">
    <property type="entry name" value="TRNASYNTHSER"/>
</dbReference>
<dbReference type="SUPFAM" id="SSF55681">
    <property type="entry name" value="Class II aaRS and biotin synthetases"/>
    <property type="match status" value="1"/>
</dbReference>
<dbReference type="SUPFAM" id="SSF46589">
    <property type="entry name" value="tRNA-binding arm"/>
    <property type="match status" value="1"/>
</dbReference>
<dbReference type="PROSITE" id="PS50862">
    <property type="entry name" value="AA_TRNA_LIGASE_II"/>
    <property type="match status" value="1"/>
</dbReference>
<proteinExistence type="inferred from homology"/>
<protein>
    <recommendedName>
        <fullName evidence="1">Serine--tRNA ligase</fullName>
        <ecNumber evidence="1">6.1.1.11</ecNumber>
    </recommendedName>
    <alternativeName>
        <fullName evidence="1">Seryl-tRNA synthetase</fullName>
        <shortName evidence="1">SerRS</shortName>
    </alternativeName>
    <alternativeName>
        <fullName evidence="1">Seryl-tRNA(Ser/Sec) synthetase</fullName>
    </alternativeName>
</protein>
<sequence length="424" mass="48744">MLDIKFLRTNFEEVKAKLQHRGEDLTDFGRFEELDTRRRELLVQTEELKSKRNEVSQQISVLKREKKDAEALILEMREVGEKVKDLDNELRTVEEDLERLMLSIPNIPHESAPVGETEDDNVVARTWGEVKEFAFEPKPHWDLATDLGILDFERAGKVTGSRFVFYKGAGARLERALISFMLDLHTDEHGYEEVLPPYMVNRASMTGTGQLPKFEEDAFRIESEDYFLIPTAEVPVTNMHRDEILNKEQLPIRYAAFSSCFRSEAGSAGRDTRGLIRQHQFNKVELVKFVKPEDSYEELEKLTNDAERVLQLLELPYRVMSMCTGDLGFTAAKKYDIEVWIPSYGTYREISSCSNFEAFQARRANIRFRREPNGKPEHVHTLNGSGLAIGRTVAAILENYQQEDGTIIIPEVLRPYMGGKTVIK</sequence>
<evidence type="ECO:0000255" key="1">
    <source>
        <dbReference type="HAMAP-Rule" id="MF_00176"/>
    </source>
</evidence>
<gene>
    <name evidence="1" type="primary">serS</name>
    <name type="ordered locus">BT9727_0013</name>
</gene>
<name>SYS_BACHK</name>
<feature type="chain" id="PRO_0000122002" description="Serine--tRNA ligase">
    <location>
        <begin position="1"/>
        <end position="424"/>
    </location>
</feature>
<feature type="binding site" evidence="1">
    <location>
        <begin position="231"/>
        <end position="233"/>
    </location>
    <ligand>
        <name>L-serine</name>
        <dbReference type="ChEBI" id="CHEBI:33384"/>
    </ligand>
</feature>
<feature type="binding site" evidence="1">
    <location>
        <begin position="262"/>
        <end position="264"/>
    </location>
    <ligand>
        <name>ATP</name>
        <dbReference type="ChEBI" id="CHEBI:30616"/>
    </ligand>
</feature>
<feature type="binding site" evidence="1">
    <location>
        <position position="285"/>
    </location>
    <ligand>
        <name>L-serine</name>
        <dbReference type="ChEBI" id="CHEBI:33384"/>
    </ligand>
</feature>
<feature type="binding site" evidence="1">
    <location>
        <begin position="349"/>
        <end position="352"/>
    </location>
    <ligand>
        <name>ATP</name>
        <dbReference type="ChEBI" id="CHEBI:30616"/>
    </ligand>
</feature>
<feature type="binding site" evidence="1">
    <location>
        <position position="385"/>
    </location>
    <ligand>
        <name>L-serine</name>
        <dbReference type="ChEBI" id="CHEBI:33384"/>
    </ligand>
</feature>
<accession>Q6HPZ8</accession>
<keyword id="KW-0030">Aminoacyl-tRNA synthetase</keyword>
<keyword id="KW-0067">ATP-binding</keyword>
<keyword id="KW-0963">Cytoplasm</keyword>
<keyword id="KW-0436">Ligase</keyword>
<keyword id="KW-0547">Nucleotide-binding</keyword>
<keyword id="KW-0648">Protein biosynthesis</keyword>
<comment type="function">
    <text evidence="1">Catalyzes the attachment of serine to tRNA(Ser). Is also able to aminoacylate tRNA(Sec) with serine, to form the misacylated tRNA L-seryl-tRNA(Sec), which will be further converted into selenocysteinyl-tRNA(Sec).</text>
</comment>
<comment type="catalytic activity">
    <reaction evidence="1">
        <text>tRNA(Ser) + L-serine + ATP = L-seryl-tRNA(Ser) + AMP + diphosphate + H(+)</text>
        <dbReference type="Rhea" id="RHEA:12292"/>
        <dbReference type="Rhea" id="RHEA-COMP:9669"/>
        <dbReference type="Rhea" id="RHEA-COMP:9703"/>
        <dbReference type="ChEBI" id="CHEBI:15378"/>
        <dbReference type="ChEBI" id="CHEBI:30616"/>
        <dbReference type="ChEBI" id="CHEBI:33019"/>
        <dbReference type="ChEBI" id="CHEBI:33384"/>
        <dbReference type="ChEBI" id="CHEBI:78442"/>
        <dbReference type="ChEBI" id="CHEBI:78533"/>
        <dbReference type="ChEBI" id="CHEBI:456215"/>
        <dbReference type="EC" id="6.1.1.11"/>
    </reaction>
</comment>
<comment type="catalytic activity">
    <reaction evidence="1">
        <text>tRNA(Sec) + L-serine + ATP = L-seryl-tRNA(Sec) + AMP + diphosphate + H(+)</text>
        <dbReference type="Rhea" id="RHEA:42580"/>
        <dbReference type="Rhea" id="RHEA-COMP:9742"/>
        <dbReference type="Rhea" id="RHEA-COMP:10128"/>
        <dbReference type="ChEBI" id="CHEBI:15378"/>
        <dbReference type="ChEBI" id="CHEBI:30616"/>
        <dbReference type="ChEBI" id="CHEBI:33019"/>
        <dbReference type="ChEBI" id="CHEBI:33384"/>
        <dbReference type="ChEBI" id="CHEBI:78442"/>
        <dbReference type="ChEBI" id="CHEBI:78533"/>
        <dbReference type="ChEBI" id="CHEBI:456215"/>
        <dbReference type="EC" id="6.1.1.11"/>
    </reaction>
</comment>
<comment type="pathway">
    <text evidence="1">Aminoacyl-tRNA biosynthesis; selenocysteinyl-tRNA(Sec) biosynthesis; L-seryl-tRNA(Sec) from L-serine and tRNA(Sec): step 1/1.</text>
</comment>
<comment type="subunit">
    <text evidence="1">Homodimer. The tRNA molecule binds across the dimer.</text>
</comment>
<comment type="subcellular location">
    <subcellularLocation>
        <location evidence="1">Cytoplasm</location>
    </subcellularLocation>
</comment>
<comment type="domain">
    <text evidence="1">Consists of two distinct domains, a catalytic core and a N-terminal extension that is involved in tRNA binding.</text>
</comment>
<comment type="similarity">
    <text evidence="1">Belongs to the class-II aminoacyl-tRNA synthetase family. Type-1 seryl-tRNA synthetase subfamily.</text>
</comment>
<organism>
    <name type="scientific">Bacillus thuringiensis subsp. konkukian (strain 97-27)</name>
    <dbReference type="NCBI Taxonomy" id="281309"/>
    <lineage>
        <taxon>Bacteria</taxon>
        <taxon>Bacillati</taxon>
        <taxon>Bacillota</taxon>
        <taxon>Bacilli</taxon>
        <taxon>Bacillales</taxon>
        <taxon>Bacillaceae</taxon>
        <taxon>Bacillus</taxon>
        <taxon>Bacillus cereus group</taxon>
    </lineage>
</organism>